<feature type="initiator methionine" description="Removed" evidence="1">
    <location>
        <position position="1"/>
    </location>
</feature>
<feature type="chain" id="PRO_0000219582" description="Transcriptional regulator SarA">
    <location>
        <begin position="2"/>
        <end position="124"/>
    </location>
</feature>
<feature type="binding site">
    <location>
        <position position="7"/>
    </location>
    <ligand>
        <name>a divalent metal cation</name>
        <dbReference type="ChEBI" id="CHEBI:60240"/>
    </ligand>
</feature>
<feature type="binding site">
    <location>
        <position position="8"/>
    </location>
    <ligand>
        <name>a divalent metal cation</name>
        <dbReference type="ChEBI" id="CHEBI:60240"/>
    </ligand>
</feature>
<feature type="binding site">
    <location>
        <position position="11"/>
    </location>
    <ligand>
        <name>a divalent metal cation</name>
        <dbReference type="ChEBI" id="CHEBI:60240"/>
    </ligand>
</feature>
<feature type="mutagenesis site" description="Able to bind to the agr promoter, but fails to repress spa expression or to activate RNAII transcription; when associated with A-11." evidence="2">
    <original>D</original>
    <variation>A</variation>
    <location>
        <position position="8"/>
    </location>
</feature>
<feature type="mutagenesis site" description="Reduced binding to the spa promoter. Fails to repress spa and aur expression." evidence="2">
    <original>C</original>
    <variation>A</variation>
    <location>
        <position position="9"/>
    </location>
</feature>
<feature type="mutagenesis site" description="Able to bind to the agr promoter, but fails to repress spa expression or to activate RNAII transcription; when associated with A-8." evidence="2">
    <original>E</original>
    <variation>A</variation>
    <location>
        <position position="11"/>
    </location>
</feature>
<feature type="mutagenesis site" description="Reduced binding to the spa promoter. Able to repress spa and aur expression." evidence="2">
    <original>Y</original>
    <variation>A</variation>
    <location>
        <position position="18"/>
    </location>
</feature>
<feature type="mutagenesis site" description="Able to bind to the spa promoter. Able to repress spa and aur expression." evidence="2">
    <original>K</original>
    <variation>A</variation>
    <location>
        <position position="21"/>
    </location>
</feature>
<feature type="mutagenesis site" description="Able to bind to the spa promoter. Fails to repress spa and aur expression." evidence="2">
    <original>K</original>
    <variation>A</variation>
    <location>
        <position position="23"/>
    </location>
</feature>
<feature type="mutagenesis site" description="Able to bind to the spa promoter. Able to repress spa and aur expression." evidence="2">
    <original>K</original>
    <variation>A</variation>
    <location>
        <position position="28"/>
    </location>
</feature>
<feature type="mutagenesis site" description="Reduced binding to the spa promoter. Able to repress spa and aur expression." evidence="2">
    <original>E</original>
    <variation>A</variation>
    <location>
        <position position="29"/>
    </location>
</feature>
<feature type="mutagenesis site" description="Reduced binding to the spa promoter. Able to repress spa and aur expression." evidence="2">
    <original>E</original>
    <variation>A</variation>
    <location>
        <position position="36"/>
    </location>
</feature>
<feature type="mutagenesis site" description="Reduced binding to the spa promoter. Able to repress spa and aur expression." evidence="2">
    <original>K</original>
    <variation>A</variation>
    <location>
        <position position="54"/>
    </location>
</feature>
<feature type="mutagenesis site" description="Able to bind to the spa promoter. Able to repress spa and aur expression." evidence="2">
    <original>K</original>
    <variation>A</variation>
    <location>
        <position position="69"/>
    </location>
</feature>
<feature type="mutagenesis site" description="Reduced binding to the spa promoter. Able to repress spa and aur expression." evidence="2">
    <original>L</original>
    <variation>A</variation>
    <location>
        <position position="74"/>
    </location>
</feature>
<feature type="mutagenesis site" description="Reduced binding to the spa promoter. Able to repress spa and aur expression." evidence="2">
    <original>F</original>
    <variation>A</variation>
    <location>
        <position position="80"/>
    </location>
</feature>
<feature type="mutagenesis site" description="Able to bind to the spa promoter. Able to repress spa and aur expression." evidence="2">
    <original>K</original>
    <variation>A</variation>
    <location>
        <position position="82"/>
    </location>
</feature>
<feature type="mutagenesis site" description="Unable to bind to the spa promoter. Fails to repress spa and aur expression." evidence="2">
    <original>R</original>
    <variation>A</variation>
    <location>
        <position position="84"/>
    </location>
</feature>
<feature type="mutagenesis site" description="Able to bind to the spa promoter. Fails to repress spa and aur expression." evidence="2">
    <original>D</original>
    <variation>A</variation>
    <location>
        <position position="88"/>
    </location>
</feature>
<feature type="mutagenesis site" description="Able to bind to the spa promoter. Unable to bind to the spa promoter; when associated with A-90. Fails to repress spa and aur expression; even when associated with A-90." evidence="2">
    <original>E</original>
    <variation>A</variation>
    <location>
        <position position="89"/>
    </location>
</feature>
<feature type="mutagenesis site" description="Unable to bind to the spa promoter; even when associated with A-89. Fails to repress spa and aur expression; even when associated with A-89." evidence="2">
    <original>R</original>
    <variation>A</variation>
    <location>
        <position position="90"/>
    </location>
</feature>
<feature type="helix" evidence="5">
    <location>
        <begin position="9"/>
        <end position="28"/>
    </location>
</feature>
<feature type="helix" evidence="5">
    <location>
        <begin position="34"/>
        <end position="45"/>
    </location>
</feature>
<feature type="strand" evidence="5">
    <location>
        <begin position="49"/>
        <end position="52"/>
    </location>
</feature>
<feature type="helix" evidence="5">
    <location>
        <begin position="53"/>
        <end position="59"/>
    </location>
</feature>
<feature type="strand" evidence="5">
    <location>
        <begin position="60"/>
        <end position="62"/>
    </location>
</feature>
<feature type="helix" evidence="5">
    <location>
        <begin position="63"/>
        <end position="76"/>
    </location>
</feature>
<feature type="strand" evidence="4">
    <location>
        <begin position="78"/>
        <end position="84"/>
    </location>
</feature>
<feature type="strand" evidence="5">
    <location>
        <begin position="86"/>
        <end position="89"/>
    </location>
</feature>
<feature type="strand" evidence="5">
    <location>
        <begin position="93"/>
        <end position="95"/>
    </location>
</feature>
<feature type="helix" evidence="5">
    <location>
        <begin position="99"/>
        <end position="121"/>
    </location>
</feature>
<sequence>MAITKINDCFELLSMVTYADKLKSLIKKEFSISFEEFAVLTYISENKEKEYYLKDIINHLNYKQPQVVKAVKILSQEDYFDKKRNEHDERTVLILVNAQQRKKIESLLSRVNKRITEANNEIEL</sequence>
<keyword id="KW-0002">3D-structure</keyword>
<keyword id="KW-0010">Activator</keyword>
<keyword id="KW-0963">Cytoplasm</keyword>
<keyword id="KW-0238">DNA-binding</keyword>
<keyword id="KW-0479">Metal-binding</keyword>
<keyword id="KW-0678">Repressor</keyword>
<keyword id="KW-0804">Transcription</keyword>
<keyword id="KW-0805">Transcription regulation</keyword>
<keyword id="KW-0843">Virulence</keyword>
<evidence type="ECO:0000250" key="1"/>
<evidence type="ECO:0000269" key="2">
    <source>
    </source>
</evidence>
<evidence type="ECO:0000305" key="3"/>
<evidence type="ECO:0007829" key="4">
    <source>
        <dbReference type="PDB" id="2FNP"/>
    </source>
</evidence>
<evidence type="ECO:0007829" key="5">
    <source>
        <dbReference type="PDB" id="2FRH"/>
    </source>
</evidence>
<protein>
    <recommendedName>
        <fullName>Transcriptional regulator SarA</fullName>
    </recommendedName>
    <alternativeName>
        <fullName>Staphylococcal accessory regulator A</fullName>
    </alternativeName>
</protein>
<gene>
    <name type="primary">sarA</name>
    <name type="ordered locus">MW0580</name>
</gene>
<organism>
    <name type="scientific">Staphylococcus aureus (strain MW2)</name>
    <dbReference type="NCBI Taxonomy" id="196620"/>
    <lineage>
        <taxon>Bacteria</taxon>
        <taxon>Bacillati</taxon>
        <taxon>Bacillota</taxon>
        <taxon>Bacilli</taxon>
        <taxon>Bacillales</taxon>
        <taxon>Staphylococcaceae</taxon>
        <taxon>Staphylococcus</taxon>
    </lineage>
</organism>
<proteinExistence type="evidence at protein level"/>
<accession>Q7A1N5</accession>
<comment type="function">
    <text evidence="1 2">Global regulator with both positive and negative effects that controls the expression of several virulence factors and the biofilm formation process in a cell density-dependent manner (By similarity). Required for transcription of primary transcripts RNAII and RNAIII generated by agr (virulence accessory gene regulator) locus. Negatively regulates the expression of spa (protein A) and aur (metalloprotease aureolysin).</text>
</comment>
<comment type="subunit">
    <text evidence="2">Homodimer.</text>
</comment>
<comment type="subcellular location">
    <subcellularLocation>
        <location evidence="1">Cytoplasm</location>
    </subcellularLocation>
</comment>
<comment type="similarity">
    <text evidence="3">Belongs to the SarA family.</text>
</comment>
<dbReference type="EMBL" id="BA000033">
    <property type="protein sequence ID" value="BAB94445.1"/>
    <property type="molecule type" value="Genomic_DNA"/>
</dbReference>
<dbReference type="RefSeq" id="WP_001018677.1">
    <property type="nucleotide sequence ID" value="NC_003923.1"/>
</dbReference>
<dbReference type="PDB" id="2FNP">
    <property type="method" value="X-ray"/>
    <property type="resolution" value="2.60 A"/>
    <property type="chains" value="A/B=1-124"/>
</dbReference>
<dbReference type="PDB" id="2FRH">
    <property type="method" value="X-ray"/>
    <property type="resolution" value="2.50 A"/>
    <property type="chains" value="A/B=2-124"/>
</dbReference>
<dbReference type="PDBsum" id="2FNP"/>
<dbReference type="PDBsum" id="2FRH"/>
<dbReference type="SMR" id="Q7A1N5"/>
<dbReference type="DIP" id="DIP-61104N"/>
<dbReference type="KEGG" id="sam:MW0580"/>
<dbReference type="HOGENOM" id="CLU_164084_0_0_9"/>
<dbReference type="EvolutionaryTrace" id="Q7A1N5"/>
<dbReference type="PHI-base" id="PHI:11420"/>
<dbReference type="PHI-base" id="PHI:11994"/>
<dbReference type="PRO" id="PR:Q7A1N5"/>
<dbReference type="GO" id="GO:0005737">
    <property type="term" value="C:cytoplasm"/>
    <property type="evidence" value="ECO:0007669"/>
    <property type="project" value="UniProtKB-SubCell"/>
</dbReference>
<dbReference type="GO" id="GO:0003677">
    <property type="term" value="F:DNA binding"/>
    <property type="evidence" value="ECO:0007669"/>
    <property type="project" value="UniProtKB-KW"/>
</dbReference>
<dbReference type="GO" id="GO:0003700">
    <property type="term" value="F:DNA-binding transcription factor activity"/>
    <property type="evidence" value="ECO:0007669"/>
    <property type="project" value="InterPro"/>
</dbReference>
<dbReference type="GO" id="GO:0046872">
    <property type="term" value="F:metal ion binding"/>
    <property type="evidence" value="ECO:0007669"/>
    <property type="project" value="UniProtKB-KW"/>
</dbReference>
<dbReference type="GO" id="GO:0006950">
    <property type="term" value="P:response to stress"/>
    <property type="evidence" value="ECO:0007669"/>
    <property type="project" value="TreeGrafter"/>
</dbReference>
<dbReference type="FunFam" id="1.10.10.10:FF:000541">
    <property type="entry name" value="Transcriptional regulator SarA"/>
    <property type="match status" value="1"/>
</dbReference>
<dbReference type="Gene3D" id="1.10.10.10">
    <property type="entry name" value="Winged helix-like DNA-binding domain superfamily/Winged helix DNA-binding domain"/>
    <property type="match status" value="1"/>
</dbReference>
<dbReference type="InterPro" id="IPR039422">
    <property type="entry name" value="MarR/SlyA-like"/>
</dbReference>
<dbReference type="InterPro" id="IPR010166">
    <property type="entry name" value="SarA/Rot_dom"/>
</dbReference>
<dbReference type="InterPro" id="IPR055166">
    <property type="entry name" value="Transc_reg_Sar_Rot_HTH"/>
</dbReference>
<dbReference type="InterPro" id="IPR036388">
    <property type="entry name" value="WH-like_DNA-bd_sf"/>
</dbReference>
<dbReference type="InterPro" id="IPR036390">
    <property type="entry name" value="WH_DNA-bd_sf"/>
</dbReference>
<dbReference type="NCBIfam" id="TIGR01889">
    <property type="entry name" value="Staph_reg_Sar"/>
    <property type="match status" value="1"/>
</dbReference>
<dbReference type="NCBIfam" id="NF038268">
    <property type="entry name" value="TF_SarA"/>
    <property type="match status" value="1"/>
</dbReference>
<dbReference type="PANTHER" id="PTHR33164:SF5">
    <property type="entry name" value="ORGANIC HYDROPEROXIDE RESISTANCE TRANSCRIPTIONAL REGULATOR"/>
    <property type="match status" value="1"/>
</dbReference>
<dbReference type="PANTHER" id="PTHR33164">
    <property type="entry name" value="TRANSCRIPTIONAL REGULATOR, MARR FAMILY"/>
    <property type="match status" value="1"/>
</dbReference>
<dbReference type="Pfam" id="PF22381">
    <property type="entry name" value="Staph_reg_Sar_Rot"/>
    <property type="match status" value="1"/>
</dbReference>
<dbReference type="SUPFAM" id="SSF46785">
    <property type="entry name" value="Winged helix' DNA-binding domain"/>
    <property type="match status" value="1"/>
</dbReference>
<reference key="1">
    <citation type="journal article" date="2002" name="Lancet">
        <title>Genome and virulence determinants of high virulence community-acquired MRSA.</title>
        <authorList>
            <person name="Baba T."/>
            <person name="Takeuchi F."/>
            <person name="Kuroda M."/>
            <person name="Yuzawa H."/>
            <person name="Aoki K."/>
            <person name="Oguchi A."/>
            <person name="Nagai Y."/>
            <person name="Iwama N."/>
            <person name="Asano K."/>
            <person name="Naimi T."/>
            <person name="Kuroda H."/>
            <person name="Cui L."/>
            <person name="Yamamoto K."/>
            <person name="Hiramatsu K."/>
        </authorList>
    </citation>
    <scope>NUCLEOTIDE SEQUENCE [LARGE SCALE GENOMIC DNA]</scope>
    <source>
        <strain>MW2</strain>
    </source>
</reference>
<reference key="2">
    <citation type="journal article" date="2006" name="Proc. Natl. Acad. Sci. U.S.A.">
        <title>Structural and function analyses of the global regulatory protein SarA from Staphylococcus aureus.</title>
        <authorList>
            <person name="Liu Y."/>
            <person name="Manna A.C."/>
            <person name="Pan C.-H."/>
            <person name="Kriksunov I.A."/>
            <person name="Thiel D.J."/>
            <person name="Cheung A.L."/>
            <person name="Zhang G."/>
        </authorList>
    </citation>
    <scope>X-RAY CRYSTALLOGRAPHY (2.6 ANGSTROMS)</scope>
    <scope>SUBUNIT</scope>
    <scope>FUNCTION</scope>
    <scope>MUTAGENESIS OF ASP-8; CYS-9; GLU-11; TYR-18; LYS-21; LYS-23; LYS-28; GLU-29; GLU-36; LYS-54; LYS-69; LEU-74; PHE-80; LYS-82; ARG-84; ASP-88; GLU-89 AND ARG-90</scope>
</reference>
<name>SARA_STAAW</name>